<proteinExistence type="inferred from homology"/>
<name>RK32_PSINU</name>
<gene>
    <name evidence="1" type="primary">rpl32-A</name>
</gene>
<gene>
    <name evidence="1" type="primary">rpl32-B</name>
</gene>
<dbReference type="EMBL" id="AP004638">
    <property type="protein sequence ID" value="BAB84272.1"/>
    <property type="molecule type" value="Genomic_DNA"/>
</dbReference>
<dbReference type="EMBL" id="AP004638">
    <property type="protein sequence ID" value="BAB84284.1"/>
    <property type="molecule type" value="Genomic_DNA"/>
</dbReference>
<dbReference type="SMR" id="Q8W8J2"/>
<dbReference type="GO" id="GO:0009507">
    <property type="term" value="C:chloroplast"/>
    <property type="evidence" value="ECO:0007669"/>
    <property type="project" value="UniProtKB-SubCell"/>
</dbReference>
<dbReference type="GO" id="GO:0015934">
    <property type="term" value="C:large ribosomal subunit"/>
    <property type="evidence" value="ECO:0007669"/>
    <property type="project" value="InterPro"/>
</dbReference>
<dbReference type="GO" id="GO:0003735">
    <property type="term" value="F:structural constituent of ribosome"/>
    <property type="evidence" value="ECO:0007669"/>
    <property type="project" value="InterPro"/>
</dbReference>
<dbReference type="GO" id="GO:0006412">
    <property type="term" value="P:translation"/>
    <property type="evidence" value="ECO:0007669"/>
    <property type="project" value="UniProtKB-UniRule"/>
</dbReference>
<dbReference type="HAMAP" id="MF_00340">
    <property type="entry name" value="Ribosomal_bL32"/>
    <property type="match status" value="1"/>
</dbReference>
<dbReference type="InterPro" id="IPR002677">
    <property type="entry name" value="Ribosomal_bL32"/>
</dbReference>
<dbReference type="InterPro" id="IPR044958">
    <property type="entry name" value="Ribosomal_bL32_plant/cyanobact"/>
</dbReference>
<dbReference type="InterPro" id="IPR011332">
    <property type="entry name" value="Ribosomal_zn-bd"/>
</dbReference>
<dbReference type="PANTHER" id="PTHR36083">
    <property type="entry name" value="50S RIBOSOMAL PROTEIN L32, CHLOROPLASTIC"/>
    <property type="match status" value="1"/>
</dbReference>
<dbReference type="PANTHER" id="PTHR36083:SF1">
    <property type="entry name" value="LARGE RIBOSOMAL SUBUNIT PROTEIN BL32C"/>
    <property type="match status" value="1"/>
</dbReference>
<dbReference type="Pfam" id="PF01783">
    <property type="entry name" value="Ribosomal_L32p"/>
    <property type="match status" value="1"/>
</dbReference>
<dbReference type="SUPFAM" id="SSF57829">
    <property type="entry name" value="Zn-binding ribosomal proteins"/>
    <property type="match status" value="1"/>
</dbReference>
<reference key="1">
    <citation type="journal article" date="2004" name="Mol. Biol. Evol.">
        <title>Chloroplast phylogeny indicates that bryophytes are monophyletic.</title>
        <authorList>
            <person name="Nishiyama T."/>
            <person name="Wolf P.G."/>
            <person name="Kugita M."/>
            <person name="Sinclair R.B."/>
            <person name="Sugita M."/>
            <person name="Sugiura C."/>
            <person name="Wakasugi T."/>
            <person name="Yamada K."/>
            <person name="Yoshinaga K."/>
            <person name="Yamaguchi K."/>
            <person name="Ueda K."/>
            <person name="Hasebe M."/>
        </authorList>
    </citation>
    <scope>NUCLEOTIDE SEQUENCE [LARGE SCALE GENOMIC DNA]</scope>
    <source>
        <strain>Kingyoku</strain>
    </source>
</reference>
<keyword id="KW-0150">Chloroplast</keyword>
<keyword id="KW-0934">Plastid</keyword>
<keyword id="KW-0687">Ribonucleoprotein</keyword>
<keyword id="KW-0689">Ribosomal protein</keyword>
<organism>
    <name type="scientific">Psilotum nudum</name>
    <name type="common">Whisk fern</name>
    <name type="synonym">Lycopodium nudum</name>
    <dbReference type="NCBI Taxonomy" id="3240"/>
    <lineage>
        <taxon>Eukaryota</taxon>
        <taxon>Viridiplantae</taxon>
        <taxon>Streptophyta</taxon>
        <taxon>Embryophyta</taxon>
        <taxon>Tracheophyta</taxon>
        <taxon>Polypodiopsida</taxon>
        <taxon>Ophioglossidae</taxon>
        <taxon>Psilotales</taxon>
        <taxon>Psilotaceae</taxon>
        <taxon>Psilotum</taxon>
    </lineage>
</organism>
<feature type="chain" id="PRO_0000172477" description="Large ribosomal subunit protein bL32c">
    <location>
        <begin position="1"/>
        <end position="60"/>
    </location>
</feature>
<protein>
    <recommendedName>
        <fullName evidence="1">Large ribosomal subunit protein bL32c</fullName>
    </recommendedName>
    <alternativeName>
        <fullName evidence="2">50S ribosomal protein L32, chloroplastic</fullName>
    </alternativeName>
</protein>
<evidence type="ECO:0000255" key="1">
    <source>
        <dbReference type="HAMAP-Rule" id="MF_00340"/>
    </source>
</evidence>
<evidence type="ECO:0000305" key="2"/>
<sequence length="60" mass="7091">MAVPKKRTSKSRKRIRNNFWKKEKNDRIASRVFSLAQSILTGRSKSFYYAIRDKLPNSSE</sequence>
<accession>Q8W8J2</accession>
<comment type="subcellular location">
    <subcellularLocation>
        <location>Plastid</location>
        <location>Chloroplast</location>
    </subcellularLocation>
</comment>
<comment type="similarity">
    <text evidence="1">Belongs to the bacterial ribosomal protein bL32 family.</text>
</comment>
<geneLocation type="chloroplast"/>